<reference key="1">
    <citation type="journal article" date="2004" name="Proc. Natl. Acad. Sci. U.S.A.">
        <title>Genome sequence of the enterobacterial phytopathogen Erwinia carotovora subsp. atroseptica and characterization of virulence factors.</title>
        <authorList>
            <person name="Bell K.S."/>
            <person name="Sebaihia M."/>
            <person name="Pritchard L."/>
            <person name="Holden M.T.G."/>
            <person name="Hyman L.J."/>
            <person name="Holeva M.C."/>
            <person name="Thomson N.R."/>
            <person name="Bentley S.D."/>
            <person name="Churcher L.J.C."/>
            <person name="Mungall K."/>
            <person name="Atkin R."/>
            <person name="Bason N."/>
            <person name="Brooks K."/>
            <person name="Chillingworth T."/>
            <person name="Clark K."/>
            <person name="Doggett J."/>
            <person name="Fraser A."/>
            <person name="Hance Z."/>
            <person name="Hauser H."/>
            <person name="Jagels K."/>
            <person name="Moule S."/>
            <person name="Norbertczak H."/>
            <person name="Ormond D."/>
            <person name="Price C."/>
            <person name="Quail M.A."/>
            <person name="Sanders M."/>
            <person name="Walker D."/>
            <person name="Whitehead S."/>
            <person name="Salmond G.P.C."/>
            <person name="Birch P.R.J."/>
            <person name="Parkhill J."/>
            <person name="Toth I.K."/>
        </authorList>
    </citation>
    <scope>NUCLEOTIDE SEQUENCE [LARGE SCALE GENOMIC DNA]</scope>
    <source>
        <strain>SCRI 1043 / ATCC BAA-672</strain>
    </source>
</reference>
<gene>
    <name evidence="1" type="primary">valS</name>
    <name type="ordered locus">ECA0402</name>
</gene>
<feature type="chain" id="PRO_0000224476" description="Valine--tRNA ligase">
    <location>
        <begin position="1"/>
        <end position="951"/>
    </location>
</feature>
<feature type="coiled-coil region" evidence="1">
    <location>
        <begin position="880"/>
        <end position="914"/>
    </location>
</feature>
<feature type="short sequence motif" description="'HIGH' region">
    <location>
        <begin position="42"/>
        <end position="52"/>
    </location>
</feature>
<feature type="short sequence motif" description="'KMSKS' region">
    <location>
        <begin position="554"/>
        <end position="558"/>
    </location>
</feature>
<feature type="binding site" evidence="1">
    <location>
        <position position="557"/>
    </location>
    <ligand>
        <name>ATP</name>
        <dbReference type="ChEBI" id="CHEBI:30616"/>
    </ligand>
</feature>
<proteinExistence type="inferred from homology"/>
<accession>Q6DA54</accession>
<comment type="function">
    <text evidence="1">Catalyzes the attachment of valine to tRNA(Val). As ValRS can inadvertently accommodate and process structurally similar amino acids such as threonine, to avoid such errors, it has a 'posttransfer' editing activity that hydrolyzes mischarged Thr-tRNA(Val) in a tRNA-dependent manner.</text>
</comment>
<comment type="catalytic activity">
    <reaction evidence="1">
        <text>tRNA(Val) + L-valine + ATP = L-valyl-tRNA(Val) + AMP + diphosphate</text>
        <dbReference type="Rhea" id="RHEA:10704"/>
        <dbReference type="Rhea" id="RHEA-COMP:9672"/>
        <dbReference type="Rhea" id="RHEA-COMP:9708"/>
        <dbReference type="ChEBI" id="CHEBI:30616"/>
        <dbReference type="ChEBI" id="CHEBI:33019"/>
        <dbReference type="ChEBI" id="CHEBI:57762"/>
        <dbReference type="ChEBI" id="CHEBI:78442"/>
        <dbReference type="ChEBI" id="CHEBI:78537"/>
        <dbReference type="ChEBI" id="CHEBI:456215"/>
        <dbReference type="EC" id="6.1.1.9"/>
    </reaction>
</comment>
<comment type="subunit">
    <text evidence="1">Monomer.</text>
</comment>
<comment type="subcellular location">
    <subcellularLocation>
        <location evidence="1">Cytoplasm</location>
    </subcellularLocation>
</comment>
<comment type="domain">
    <text evidence="1">ValRS has two distinct active sites: one for aminoacylation and one for editing. The misactivated threonine is translocated from the active site to the editing site.</text>
</comment>
<comment type="domain">
    <text evidence="1">The C-terminal coiled-coil domain is crucial for aminoacylation activity.</text>
</comment>
<comment type="similarity">
    <text evidence="1">Belongs to the class-I aminoacyl-tRNA synthetase family. ValS type 1 subfamily.</text>
</comment>
<protein>
    <recommendedName>
        <fullName evidence="1">Valine--tRNA ligase</fullName>
        <ecNumber evidence="1">6.1.1.9</ecNumber>
    </recommendedName>
    <alternativeName>
        <fullName evidence="1">Valyl-tRNA synthetase</fullName>
        <shortName evidence="1">ValRS</shortName>
    </alternativeName>
</protein>
<evidence type="ECO:0000255" key="1">
    <source>
        <dbReference type="HAMAP-Rule" id="MF_02004"/>
    </source>
</evidence>
<sequence>METKYNPQDIEQPLYEHWEKQGYFKPHGNTSKESFSIMIPPPNVTGSLHMGHAFQQTIMDTLIRYQRMQGKNTLWQAGTDHAGIATQMVVERKIAAEEGKTRHDYGRDAFIDKIWQWKGESGGNITNQMRRLGNSVDWERERFTMDEGLSNAVKEVFVRLYKEDLIYRGKRLVNWDPKLRTAISDLEVENRDVKGSMWHLRYPLADGVKTAEGKDYLVVATTRPETMLGDTGVAVNPEDPRYKDLIGKEVILPLIGRRIPIVGDEHADMEKGTGCVKITPAHDFNDYEVGKRHQLPMVNILTFDGDIRQSAEIFDTNGEASTACSSEIPEAFQGLERFAARKALVAAFDELGLLEEIKAHDLTVPYGDRGGVVIEPMLTDQWYVRAAVLAKPAVEAVEDGRIQFVPKQYENMYFSWMRDIQDWCISRQLWWGHRIPAWYDANGNVYVGRTEAEVRSENNLADDVVLNQDEDVLDTWFSSGLWTFSTLGWPEQTPDLKSFHPSSVMVSGFDIIFFWIARMIMLTMHFIKDEDGKPQVPFNTVYMTGLIRDEEGQKMSKSKGNVIDPLDMVDGISLEALLEKRTGNMMQPQLAEKIRKRTEKQFPNGIEPHGTDALRFTLAALASTGRDINWDMKRLEGYRNFCNKLWNASRFVLMNTEDQDCGFNGGEMELSLADRWILAEFNRTVKAYRDALDGYRFDIAANILYEFTWNQFCDWYLELTKPVMNGGSEAELRGTRHTLVTVLEALLRLAHPIIPFITETIWLRVKALKGINDDTIMLQPFPEFNAAQEDTLALNDLEWIKQAIIAVRNIRAEMNIAPGKPLEVLLRDATAEAQRRVEENLSFIQTLARLESITLLPAGDKGPVSVTKLIEGAELLIPMAGLIDKAAELDRLAKEVAKLEAEIGRIESKLSNEGFVARAPEAVVAKEREKMDGYAVAKTKLLEQQAVIAAL</sequence>
<keyword id="KW-0030">Aminoacyl-tRNA synthetase</keyword>
<keyword id="KW-0067">ATP-binding</keyword>
<keyword id="KW-0175">Coiled coil</keyword>
<keyword id="KW-0963">Cytoplasm</keyword>
<keyword id="KW-0436">Ligase</keyword>
<keyword id="KW-0547">Nucleotide-binding</keyword>
<keyword id="KW-0648">Protein biosynthesis</keyword>
<keyword id="KW-1185">Reference proteome</keyword>
<organism>
    <name type="scientific">Pectobacterium atrosepticum (strain SCRI 1043 / ATCC BAA-672)</name>
    <name type="common">Erwinia carotovora subsp. atroseptica</name>
    <dbReference type="NCBI Taxonomy" id="218491"/>
    <lineage>
        <taxon>Bacteria</taxon>
        <taxon>Pseudomonadati</taxon>
        <taxon>Pseudomonadota</taxon>
        <taxon>Gammaproteobacteria</taxon>
        <taxon>Enterobacterales</taxon>
        <taxon>Pectobacteriaceae</taxon>
        <taxon>Pectobacterium</taxon>
    </lineage>
</organism>
<name>SYV_PECAS</name>
<dbReference type="EC" id="6.1.1.9" evidence="1"/>
<dbReference type="EMBL" id="BX950851">
    <property type="protein sequence ID" value="CAG73321.1"/>
    <property type="molecule type" value="Genomic_DNA"/>
</dbReference>
<dbReference type="RefSeq" id="WP_011092031.1">
    <property type="nucleotide sequence ID" value="NC_004547.2"/>
</dbReference>
<dbReference type="SMR" id="Q6DA54"/>
<dbReference type="STRING" id="218491.ECA0402"/>
<dbReference type="KEGG" id="eca:ECA0402"/>
<dbReference type="PATRIC" id="fig|218491.5.peg.404"/>
<dbReference type="eggNOG" id="COG0525">
    <property type="taxonomic scope" value="Bacteria"/>
</dbReference>
<dbReference type="HOGENOM" id="CLU_001493_0_2_6"/>
<dbReference type="OrthoDB" id="9810365at2"/>
<dbReference type="Proteomes" id="UP000007966">
    <property type="component" value="Chromosome"/>
</dbReference>
<dbReference type="GO" id="GO:0005829">
    <property type="term" value="C:cytosol"/>
    <property type="evidence" value="ECO:0007669"/>
    <property type="project" value="TreeGrafter"/>
</dbReference>
<dbReference type="GO" id="GO:0002161">
    <property type="term" value="F:aminoacyl-tRNA deacylase activity"/>
    <property type="evidence" value="ECO:0007669"/>
    <property type="project" value="InterPro"/>
</dbReference>
<dbReference type="GO" id="GO:0005524">
    <property type="term" value="F:ATP binding"/>
    <property type="evidence" value="ECO:0007669"/>
    <property type="project" value="UniProtKB-UniRule"/>
</dbReference>
<dbReference type="GO" id="GO:0004832">
    <property type="term" value="F:valine-tRNA ligase activity"/>
    <property type="evidence" value="ECO:0007669"/>
    <property type="project" value="UniProtKB-UniRule"/>
</dbReference>
<dbReference type="GO" id="GO:0006438">
    <property type="term" value="P:valyl-tRNA aminoacylation"/>
    <property type="evidence" value="ECO:0007669"/>
    <property type="project" value="UniProtKB-UniRule"/>
</dbReference>
<dbReference type="CDD" id="cd07962">
    <property type="entry name" value="Anticodon_Ia_Val"/>
    <property type="match status" value="1"/>
</dbReference>
<dbReference type="CDD" id="cd00817">
    <property type="entry name" value="ValRS_core"/>
    <property type="match status" value="1"/>
</dbReference>
<dbReference type="FunFam" id="1.10.287.380:FF:000001">
    <property type="entry name" value="Valine--tRNA ligase"/>
    <property type="match status" value="1"/>
</dbReference>
<dbReference type="FunFam" id="1.10.730.10:FF:000007">
    <property type="entry name" value="Valine--tRNA ligase"/>
    <property type="match status" value="1"/>
</dbReference>
<dbReference type="FunFam" id="3.40.50.620:FF:000032">
    <property type="entry name" value="Valine--tRNA ligase"/>
    <property type="match status" value="1"/>
</dbReference>
<dbReference type="FunFam" id="3.40.50.620:FF:000146">
    <property type="entry name" value="Valine--tRNA ligase"/>
    <property type="match status" value="1"/>
</dbReference>
<dbReference type="FunFam" id="3.90.740.10:FF:000003">
    <property type="entry name" value="Valine--tRNA ligase"/>
    <property type="match status" value="1"/>
</dbReference>
<dbReference type="FunFam" id="3.90.740.10:FF:000004">
    <property type="entry name" value="Valine--tRNA ligase"/>
    <property type="match status" value="1"/>
</dbReference>
<dbReference type="Gene3D" id="3.40.50.620">
    <property type="entry name" value="HUPs"/>
    <property type="match status" value="2"/>
</dbReference>
<dbReference type="Gene3D" id="1.10.730.10">
    <property type="entry name" value="Isoleucyl-tRNA Synthetase, Domain 1"/>
    <property type="match status" value="1"/>
</dbReference>
<dbReference type="Gene3D" id="1.10.287.380">
    <property type="entry name" value="Valyl-tRNA synthetase, C-terminal domain"/>
    <property type="match status" value="1"/>
</dbReference>
<dbReference type="Gene3D" id="3.90.740.10">
    <property type="entry name" value="Valyl/Leucyl/Isoleucyl-tRNA synthetase, editing domain"/>
    <property type="match status" value="2"/>
</dbReference>
<dbReference type="HAMAP" id="MF_02004">
    <property type="entry name" value="Val_tRNA_synth_type1"/>
    <property type="match status" value="1"/>
</dbReference>
<dbReference type="InterPro" id="IPR001412">
    <property type="entry name" value="aa-tRNA-synth_I_CS"/>
</dbReference>
<dbReference type="InterPro" id="IPR002300">
    <property type="entry name" value="aa-tRNA-synth_Ia"/>
</dbReference>
<dbReference type="InterPro" id="IPR033705">
    <property type="entry name" value="Anticodon_Ia_Val"/>
</dbReference>
<dbReference type="InterPro" id="IPR013155">
    <property type="entry name" value="M/V/L/I-tRNA-synth_anticd-bd"/>
</dbReference>
<dbReference type="InterPro" id="IPR014729">
    <property type="entry name" value="Rossmann-like_a/b/a_fold"/>
</dbReference>
<dbReference type="InterPro" id="IPR010978">
    <property type="entry name" value="tRNA-bd_arm"/>
</dbReference>
<dbReference type="InterPro" id="IPR009080">
    <property type="entry name" value="tRNAsynth_Ia_anticodon-bd"/>
</dbReference>
<dbReference type="InterPro" id="IPR037118">
    <property type="entry name" value="Val-tRNA_synth_C_sf"/>
</dbReference>
<dbReference type="InterPro" id="IPR019499">
    <property type="entry name" value="Val-tRNA_synth_tRNA-bd"/>
</dbReference>
<dbReference type="InterPro" id="IPR009008">
    <property type="entry name" value="Val/Leu/Ile-tRNA-synth_edit"/>
</dbReference>
<dbReference type="InterPro" id="IPR002303">
    <property type="entry name" value="Valyl-tRNA_ligase"/>
</dbReference>
<dbReference type="NCBIfam" id="NF004349">
    <property type="entry name" value="PRK05729.1"/>
    <property type="match status" value="1"/>
</dbReference>
<dbReference type="NCBIfam" id="TIGR00422">
    <property type="entry name" value="valS"/>
    <property type="match status" value="1"/>
</dbReference>
<dbReference type="PANTHER" id="PTHR11946:SF93">
    <property type="entry name" value="VALINE--TRNA LIGASE, CHLOROPLASTIC_MITOCHONDRIAL 2"/>
    <property type="match status" value="1"/>
</dbReference>
<dbReference type="PANTHER" id="PTHR11946">
    <property type="entry name" value="VALYL-TRNA SYNTHETASES"/>
    <property type="match status" value="1"/>
</dbReference>
<dbReference type="Pfam" id="PF08264">
    <property type="entry name" value="Anticodon_1"/>
    <property type="match status" value="1"/>
</dbReference>
<dbReference type="Pfam" id="PF00133">
    <property type="entry name" value="tRNA-synt_1"/>
    <property type="match status" value="1"/>
</dbReference>
<dbReference type="Pfam" id="PF10458">
    <property type="entry name" value="Val_tRNA-synt_C"/>
    <property type="match status" value="1"/>
</dbReference>
<dbReference type="PRINTS" id="PR00986">
    <property type="entry name" value="TRNASYNTHVAL"/>
</dbReference>
<dbReference type="SUPFAM" id="SSF47323">
    <property type="entry name" value="Anticodon-binding domain of a subclass of class I aminoacyl-tRNA synthetases"/>
    <property type="match status" value="1"/>
</dbReference>
<dbReference type="SUPFAM" id="SSF52374">
    <property type="entry name" value="Nucleotidylyl transferase"/>
    <property type="match status" value="1"/>
</dbReference>
<dbReference type="SUPFAM" id="SSF46589">
    <property type="entry name" value="tRNA-binding arm"/>
    <property type="match status" value="1"/>
</dbReference>
<dbReference type="SUPFAM" id="SSF50677">
    <property type="entry name" value="ValRS/IleRS/LeuRS editing domain"/>
    <property type="match status" value="1"/>
</dbReference>
<dbReference type="PROSITE" id="PS00178">
    <property type="entry name" value="AA_TRNA_LIGASE_I"/>
    <property type="match status" value="1"/>
</dbReference>